<organism>
    <name type="scientific">Vibrio campbellii (strain ATCC BAA-1116)</name>
    <dbReference type="NCBI Taxonomy" id="2902295"/>
    <lineage>
        <taxon>Bacteria</taxon>
        <taxon>Pseudomonadati</taxon>
        <taxon>Pseudomonadota</taxon>
        <taxon>Gammaproteobacteria</taxon>
        <taxon>Vibrionales</taxon>
        <taxon>Vibrionaceae</taxon>
        <taxon>Vibrio</taxon>
    </lineage>
</organism>
<reference key="1">
    <citation type="submission" date="2007-08" db="EMBL/GenBank/DDBJ databases">
        <authorList>
            <consortium name="The Vibrio harveyi Genome Sequencing Project"/>
            <person name="Bassler B."/>
            <person name="Clifton S.W."/>
            <person name="Fulton L."/>
            <person name="Delehaunty K."/>
            <person name="Fronick C."/>
            <person name="Harrison M."/>
            <person name="Markivic C."/>
            <person name="Fulton R."/>
            <person name="Tin-Wollam A.-M."/>
            <person name="Shah N."/>
            <person name="Pepin K."/>
            <person name="Nash W."/>
            <person name="Thiruvilangam P."/>
            <person name="Bhonagiri V."/>
            <person name="Waters C."/>
            <person name="Tu K.C."/>
            <person name="Irgon J."/>
            <person name="Wilson R.K."/>
        </authorList>
    </citation>
    <scope>NUCLEOTIDE SEQUENCE [LARGE SCALE GENOMIC DNA]</scope>
    <source>
        <strain>ATCC BAA-1116 / BB120</strain>
    </source>
</reference>
<name>MUKF_VIBC1</name>
<comment type="function">
    <text evidence="1">Involved in chromosome condensation, segregation and cell cycle progression. May participate in facilitating chromosome segregation by condensation DNA from both sides of a centrally located replisome during cell division. Not required for mini-F plasmid partitioning. Probably acts via its interaction with MukB and MukE. Overexpression results in anucleate cells. It has a calcium binding activity.</text>
</comment>
<comment type="subunit">
    <text evidence="1">Interacts, and probably forms a ternary complex, with MukE and MukB via its C-terminal region. The complex formation is stimulated by calcium or magnesium. It is required for an interaction between MukE and MukB.</text>
</comment>
<comment type="subcellular location">
    <subcellularLocation>
        <location evidence="1">Cytoplasm</location>
        <location evidence="1">Nucleoid</location>
    </subcellularLocation>
    <text evidence="1">Restricted to the nucleoid region.</text>
</comment>
<comment type="similarity">
    <text evidence="1">Belongs to the MukF family.</text>
</comment>
<sequence>MSEMTLNAAEQPIDELVGWVKQHDFSLNLTTERLAFLIAIAVLSNERFDEELGEGELHDAFAIVTRLFDETGEASAFRANNAINEMVKQRLISRFVSEITDGASIYRLSPLAIGITDYYVRHREFSKLRLSIQLSMVADEMAKAIEAAQKGGTPGHWKKNVYGILKYSVGEIFDQIDLNQRVMDEQQQSVKQQIADLLNKDWREAINNCEALLSETSSTLRELQDTLQAASDELQTQILDIQEIVYGDPELEFIEEALFGLQMKLDRITSWGQQAIDLWIGYDRHVHKFIRTAIDMDKNRAFSSRLRQSVKDYFDSPWYLTYADAERLSDLRDEALVLRDDEVTGQVPMEVEYEEFQQVNDELAERIGDMLKAHKDQGAPIDLSVVLRDYLAQHPHTHHFDLARIVVDQAVRLGYSESDYQAVQPDWKAINEFGAKVQANVIDRY</sequence>
<accession>A7N1J9</accession>
<keyword id="KW-0106">Calcium</keyword>
<keyword id="KW-0131">Cell cycle</keyword>
<keyword id="KW-0132">Cell division</keyword>
<keyword id="KW-0159">Chromosome partition</keyword>
<keyword id="KW-0963">Cytoplasm</keyword>
<keyword id="KW-0226">DNA condensation</keyword>
<dbReference type="EMBL" id="CP000789">
    <property type="protein sequence ID" value="ABU70557.1"/>
    <property type="molecule type" value="Genomic_DNA"/>
</dbReference>
<dbReference type="RefSeq" id="WP_005426221.1">
    <property type="nucleotide sequence ID" value="NC_009783.1"/>
</dbReference>
<dbReference type="SMR" id="A7N1J9"/>
<dbReference type="KEGG" id="vha:VIBHAR_01587"/>
<dbReference type="PATRIC" id="fig|338187.25.peg.1075"/>
<dbReference type="Proteomes" id="UP000008152">
    <property type="component" value="Chromosome I"/>
</dbReference>
<dbReference type="GO" id="GO:0005737">
    <property type="term" value="C:cytoplasm"/>
    <property type="evidence" value="ECO:0007669"/>
    <property type="project" value="UniProtKB-UniRule"/>
</dbReference>
<dbReference type="GO" id="GO:0009295">
    <property type="term" value="C:nucleoid"/>
    <property type="evidence" value="ECO:0007669"/>
    <property type="project" value="UniProtKB-SubCell"/>
</dbReference>
<dbReference type="GO" id="GO:0005509">
    <property type="term" value="F:calcium ion binding"/>
    <property type="evidence" value="ECO:0007669"/>
    <property type="project" value="UniProtKB-UniRule"/>
</dbReference>
<dbReference type="GO" id="GO:0051301">
    <property type="term" value="P:cell division"/>
    <property type="evidence" value="ECO:0007669"/>
    <property type="project" value="UniProtKB-KW"/>
</dbReference>
<dbReference type="GO" id="GO:0030261">
    <property type="term" value="P:chromosome condensation"/>
    <property type="evidence" value="ECO:0007669"/>
    <property type="project" value="UniProtKB-KW"/>
</dbReference>
<dbReference type="GO" id="GO:0007059">
    <property type="term" value="P:chromosome segregation"/>
    <property type="evidence" value="ECO:0007669"/>
    <property type="project" value="UniProtKB-UniRule"/>
</dbReference>
<dbReference type="GO" id="GO:0006260">
    <property type="term" value="P:DNA replication"/>
    <property type="evidence" value="ECO:0007669"/>
    <property type="project" value="UniProtKB-UniRule"/>
</dbReference>
<dbReference type="CDD" id="cd16337">
    <property type="entry name" value="MukF_C"/>
    <property type="match status" value="1"/>
</dbReference>
<dbReference type="CDD" id="cd16335">
    <property type="entry name" value="MukF_N"/>
    <property type="match status" value="1"/>
</dbReference>
<dbReference type="Gene3D" id="1.20.58.590">
    <property type="entry name" value="Chromosome partition protein MukF, middle domain"/>
    <property type="match status" value="1"/>
</dbReference>
<dbReference type="Gene3D" id="1.10.225.40">
    <property type="entry name" value="MukF, C-terminal domain"/>
    <property type="match status" value="1"/>
</dbReference>
<dbReference type="Gene3D" id="1.10.10.10">
    <property type="entry name" value="Winged helix-like DNA-binding domain superfamily/Winged helix DNA-binding domain"/>
    <property type="match status" value="1"/>
</dbReference>
<dbReference type="HAMAP" id="MF_01803">
    <property type="entry name" value="MukF"/>
    <property type="match status" value="1"/>
</dbReference>
<dbReference type="InterPro" id="IPR005582">
    <property type="entry name" value="Chromosome_partition_MukF"/>
</dbReference>
<dbReference type="InterPro" id="IPR033441">
    <property type="entry name" value="MukF_C"/>
</dbReference>
<dbReference type="InterPro" id="IPR038198">
    <property type="entry name" value="MukF_C_sf"/>
</dbReference>
<dbReference type="InterPro" id="IPR033440">
    <property type="entry name" value="MukF_M"/>
</dbReference>
<dbReference type="InterPro" id="IPR036141">
    <property type="entry name" value="MukF_M_sp"/>
</dbReference>
<dbReference type="InterPro" id="IPR033439">
    <property type="entry name" value="MukF_WHTH"/>
</dbReference>
<dbReference type="InterPro" id="IPR036388">
    <property type="entry name" value="WH-like_DNA-bd_sf"/>
</dbReference>
<dbReference type="InterPro" id="IPR036390">
    <property type="entry name" value="WH_DNA-bd_sf"/>
</dbReference>
<dbReference type="NCBIfam" id="NF003615">
    <property type="entry name" value="PRK05260.1"/>
    <property type="match status" value="1"/>
</dbReference>
<dbReference type="Pfam" id="PF03882">
    <property type="entry name" value="KicB"/>
    <property type="match status" value="1"/>
</dbReference>
<dbReference type="Pfam" id="PF17193">
    <property type="entry name" value="MukF_C"/>
    <property type="match status" value="1"/>
</dbReference>
<dbReference type="Pfam" id="PF17192">
    <property type="entry name" value="MukF_M"/>
    <property type="match status" value="1"/>
</dbReference>
<dbReference type="PIRSF" id="PIRSF018282">
    <property type="entry name" value="MukF"/>
    <property type="match status" value="1"/>
</dbReference>
<dbReference type="SUPFAM" id="SSF140570">
    <property type="entry name" value="MukF C-terminal domain-like"/>
    <property type="match status" value="1"/>
</dbReference>
<dbReference type="SUPFAM" id="SSF46785">
    <property type="entry name" value="Winged helix' DNA-binding domain"/>
    <property type="match status" value="1"/>
</dbReference>
<proteinExistence type="inferred from homology"/>
<evidence type="ECO:0000255" key="1">
    <source>
        <dbReference type="HAMAP-Rule" id="MF_01803"/>
    </source>
</evidence>
<protein>
    <recommendedName>
        <fullName evidence="1">Chromosome partition protein MukF</fullName>
    </recommendedName>
</protein>
<feature type="chain" id="PRO_1000069944" description="Chromosome partition protein MukF">
    <location>
        <begin position="1"/>
        <end position="445"/>
    </location>
</feature>
<feature type="region of interest" description="Leucine-zipper">
    <location>
        <begin position="213"/>
        <end position="241"/>
    </location>
</feature>
<gene>
    <name evidence="1" type="primary">mukF</name>
    <name type="ordered locus">VIBHAR_01587</name>
</gene>